<sequence>MTATKQHKKVILVGDGAVGSSYAFALVNQGIAQELGIIEIPQLFEKAVGDAEDLSHALAFTSPKKIYAATYADCADADLVVITAGAPQKPGETRLDLVGKNLAINKSIVTQVVESGFNGIFLVAANPVDVLTYSTWKFSGFPKERVIGSGTSLDSARFRQALAEKIGIDARSVHAYIMGEHGDSEFAVWSHANVAGVKLEQWLQANRDLNEQDLVDLFISVRDAAYSIINKKGATYYGIAVALARITKAILDDENAVLPLSVFQEGQYGVENVFIGQPAIVGAHGIVRPVNIPLNDAETQKMQASAKELQAIIDEAWKNPEFQEASKN</sequence>
<gene>
    <name evidence="1" type="primary">ldh</name>
    <name type="ordered locus">SSA_1221</name>
</gene>
<protein>
    <recommendedName>
        <fullName evidence="1">L-lactate dehydrogenase</fullName>
        <shortName evidence="1">L-LDH</shortName>
        <ecNumber evidence="1">1.1.1.27</ecNumber>
    </recommendedName>
</protein>
<proteinExistence type="inferred from homology"/>
<feature type="chain" id="PRO_1000026515" description="L-lactate dehydrogenase">
    <location>
        <begin position="1"/>
        <end position="328"/>
    </location>
</feature>
<feature type="active site" description="Proton acceptor" evidence="1">
    <location>
        <position position="181"/>
    </location>
</feature>
<feature type="binding site" evidence="1">
    <location>
        <position position="18"/>
    </location>
    <ligand>
        <name>NAD(+)</name>
        <dbReference type="ChEBI" id="CHEBI:57540"/>
    </ligand>
</feature>
<feature type="binding site" evidence="1">
    <location>
        <position position="39"/>
    </location>
    <ligand>
        <name>NAD(+)</name>
        <dbReference type="ChEBI" id="CHEBI:57540"/>
    </ligand>
</feature>
<feature type="binding site" evidence="1">
    <location>
        <position position="46"/>
    </location>
    <ligand>
        <name>NAD(+)</name>
        <dbReference type="ChEBI" id="CHEBI:57540"/>
    </ligand>
</feature>
<feature type="binding site" evidence="1">
    <location>
        <position position="71"/>
    </location>
    <ligand>
        <name>NAD(+)</name>
        <dbReference type="ChEBI" id="CHEBI:57540"/>
    </ligand>
</feature>
<feature type="binding site" evidence="1">
    <location>
        <begin position="85"/>
        <end position="86"/>
    </location>
    <ligand>
        <name>NAD(+)</name>
        <dbReference type="ChEBI" id="CHEBI:57540"/>
    </ligand>
</feature>
<feature type="binding site" evidence="1">
    <location>
        <position position="88"/>
    </location>
    <ligand>
        <name>substrate</name>
    </ligand>
</feature>
<feature type="binding site" evidence="1">
    <location>
        <position position="94"/>
    </location>
    <ligand>
        <name>substrate</name>
    </ligand>
</feature>
<feature type="binding site" evidence="1">
    <location>
        <position position="107"/>
    </location>
    <ligand>
        <name>NAD(+)</name>
        <dbReference type="ChEBI" id="CHEBI:57540"/>
    </ligand>
</feature>
<feature type="binding site" evidence="1">
    <location>
        <begin position="124"/>
        <end position="126"/>
    </location>
    <ligand>
        <name>NAD(+)</name>
        <dbReference type="ChEBI" id="CHEBI:57540"/>
    </ligand>
</feature>
<feature type="binding site" evidence="1">
    <location>
        <begin position="126"/>
        <end position="129"/>
    </location>
    <ligand>
        <name>substrate</name>
    </ligand>
</feature>
<feature type="binding site" evidence="1">
    <location>
        <position position="149"/>
    </location>
    <ligand>
        <name>NAD(+)</name>
        <dbReference type="ChEBI" id="CHEBI:57540"/>
    </ligand>
</feature>
<feature type="binding site" evidence="1">
    <location>
        <begin position="154"/>
        <end position="157"/>
    </location>
    <ligand>
        <name>substrate</name>
    </ligand>
</feature>
<feature type="binding site" evidence="1">
    <location>
        <position position="159"/>
    </location>
    <ligand>
        <name>beta-D-fructose 1,6-bisphosphate</name>
        <dbReference type="ChEBI" id="CHEBI:32966"/>
        <note>allosteric activator</note>
    </ligand>
</feature>
<feature type="binding site" evidence="1">
    <location>
        <position position="174"/>
    </location>
    <ligand>
        <name>beta-D-fructose 1,6-bisphosphate</name>
        <dbReference type="ChEBI" id="CHEBI:32966"/>
        <note>allosteric activator</note>
    </ligand>
</feature>
<feature type="binding site" evidence="1">
    <location>
        <position position="235"/>
    </location>
    <ligand>
        <name>substrate</name>
    </ligand>
</feature>
<feature type="modified residue" description="Phosphotyrosine" evidence="1">
    <location>
        <position position="226"/>
    </location>
</feature>
<reference key="1">
    <citation type="journal article" date="2007" name="J. Bacteriol.">
        <title>Genome of the opportunistic pathogen Streptococcus sanguinis.</title>
        <authorList>
            <person name="Xu P."/>
            <person name="Alves J.M."/>
            <person name="Kitten T."/>
            <person name="Brown A."/>
            <person name="Chen Z."/>
            <person name="Ozaki L.S."/>
            <person name="Manque P."/>
            <person name="Ge X."/>
            <person name="Serrano M.G."/>
            <person name="Puiu D."/>
            <person name="Hendricks S."/>
            <person name="Wang Y."/>
            <person name="Chaplin M.D."/>
            <person name="Akan D."/>
            <person name="Paik S."/>
            <person name="Peterson D.L."/>
            <person name="Macrina F.L."/>
            <person name="Buck G.A."/>
        </authorList>
    </citation>
    <scope>NUCLEOTIDE SEQUENCE [LARGE SCALE GENOMIC DNA]</scope>
    <source>
        <strain>SK36</strain>
    </source>
</reference>
<accession>A3CN70</accession>
<evidence type="ECO:0000255" key="1">
    <source>
        <dbReference type="HAMAP-Rule" id="MF_00488"/>
    </source>
</evidence>
<comment type="function">
    <text evidence="1">Catalyzes the conversion of lactate to pyruvate.</text>
</comment>
<comment type="catalytic activity">
    <reaction evidence="1">
        <text>(S)-lactate + NAD(+) = pyruvate + NADH + H(+)</text>
        <dbReference type="Rhea" id="RHEA:23444"/>
        <dbReference type="ChEBI" id="CHEBI:15361"/>
        <dbReference type="ChEBI" id="CHEBI:15378"/>
        <dbReference type="ChEBI" id="CHEBI:16651"/>
        <dbReference type="ChEBI" id="CHEBI:57540"/>
        <dbReference type="ChEBI" id="CHEBI:57945"/>
        <dbReference type="EC" id="1.1.1.27"/>
    </reaction>
</comment>
<comment type="activity regulation">
    <text evidence="1">Allosterically activated by fructose 1,6-bisphosphate (FBP).</text>
</comment>
<comment type="pathway">
    <text evidence="1">Fermentation; pyruvate fermentation to lactate; (S)-lactate from pyruvate: step 1/1.</text>
</comment>
<comment type="subunit">
    <text evidence="1">Homotetramer.</text>
</comment>
<comment type="subcellular location">
    <subcellularLocation>
        <location evidence="1">Cytoplasm</location>
    </subcellularLocation>
</comment>
<comment type="similarity">
    <text evidence="1">Belongs to the LDH/MDH superfamily. LDH family.</text>
</comment>
<keyword id="KW-0021">Allosteric enzyme</keyword>
<keyword id="KW-0963">Cytoplasm</keyword>
<keyword id="KW-0520">NAD</keyword>
<keyword id="KW-0560">Oxidoreductase</keyword>
<keyword id="KW-0597">Phosphoprotein</keyword>
<keyword id="KW-1185">Reference proteome</keyword>
<name>LDH_STRSV</name>
<dbReference type="EC" id="1.1.1.27" evidence="1"/>
<dbReference type="EMBL" id="CP000387">
    <property type="protein sequence ID" value="ABN44625.1"/>
    <property type="molecule type" value="Genomic_DNA"/>
</dbReference>
<dbReference type="RefSeq" id="WP_002895436.1">
    <property type="nucleotide sequence ID" value="NC_009009.1"/>
</dbReference>
<dbReference type="RefSeq" id="YP_001035175.1">
    <property type="nucleotide sequence ID" value="NC_009009.1"/>
</dbReference>
<dbReference type="SMR" id="A3CN70"/>
<dbReference type="STRING" id="388919.SSA_1221"/>
<dbReference type="KEGG" id="ssa:SSA_1221"/>
<dbReference type="PATRIC" id="fig|388919.9.peg.1162"/>
<dbReference type="eggNOG" id="COG0039">
    <property type="taxonomic scope" value="Bacteria"/>
</dbReference>
<dbReference type="HOGENOM" id="CLU_045401_1_1_9"/>
<dbReference type="OrthoDB" id="9802969at2"/>
<dbReference type="UniPathway" id="UPA00554">
    <property type="reaction ID" value="UER00611"/>
</dbReference>
<dbReference type="Proteomes" id="UP000002148">
    <property type="component" value="Chromosome"/>
</dbReference>
<dbReference type="GO" id="GO:0005737">
    <property type="term" value="C:cytoplasm"/>
    <property type="evidence" value="ECO:0007669"/>
    <property type="project" value="UniProtKB-SubCell"/>
</dbReference>
<dbReference type="GO" id="GO:0004459">
    <property type="term" value="F:L-lactate dehydrogenase activity"/>
    <property type="evidence" value="ECO:0007669"/>
    <property type="project" value="UniProtKB-UniRule"/>
</dbReference>
<dbReference type="GO" id="GO:0006096">
    <property type="term" value="P:glycolytic process"/>
    <property type="evidence" value="ECO:0007669"/>
    <property type="project" value="UniProtKB-UniRule"/>
</dbReference>
<dbReference type="GO" id="GO:0006089">
    <property type="term" value="P:lactate metabolic process"/>
    <property type="evidence" value="ECO:0007669"/>
    <property type="project" value="TreeGrafter"/>
</dbReference>
<dbReference type="CDD" id="cd05291">
    <property type="entry name" value="HicDH_like"/>
    <property type="match status" value="1"/>
</dbReference>
<dbReference type="FunFam" id="3.40.50.720:FF:000018">
    <property type="entry name" value="Malate dehydrogenase"/>
    <property type="match status" value="1"/>
</dbReference>
<dbReference type="Gene3D" id="3.90.110.10">
    <property type="entry name" value="Lactate dehydrogenase/glycoside hydrolase, family 4, C-terminal"/>
    <property type="match status" value="1"/>
</dbReference>
<dbReference type="Gene3D" id="3.40.50.720">
    <property type="entry name" value="NAD(P)-binding Rossmann-like Domain"/>
    <property type="match status" value="1"/>
</dbReference>
<dbReference type="HAMAP" id="MF_00488">
    <property type="entry name" value="Lactate_dehydrog"/>
    <property type="match status" value="1"/>
</dbReference>
<dbReference type="InterPro" id="IPR001557">
    <property type="entry name" value="L-lactate/malate_DH"/>
</dbReference>
<dbReference type="InterPro" id="IPR011304">
    <property type="entry name" value="L-lactate_DH"/>
</dbReference>
<dbReference type="InterPro" id="IPR018177">
    <property type="entry name" value="L-lactate_DH_AS"/>
</dbReference>
<dbReference type="InterPro" id="IPR022383">
    <property type="entry name" value="Lactate/malate_DH_C"/>
</dbReference>
<dbReference type="InterPro" id="IPR001236">
    <property type="entry name" value="Lactate/malate_DH_N"/>
</dbReference>
<dbReference type="InterPro" id="IPR015955">
    <property type="entry name" value="Lactate_DH/Glyco_Ohase_4_C"/>
</dbReference>
<dbReference type="InterPro" id="IPR036291">
    <property type="entry name" value="NAD(P)-bd_dom_sf"/>
</dbReference>
<dbReference type="NCBIfam" id="TIGR01771">
    <property type="entry name" value="L-LDH-NAD"/>
    <property type="match status" value="1"/>
</dbReference>
<dbReference type="NCBIfam" id="NF000824">
    <property type="entry name" value="PRK00066.1"/>
    <property type="match status" value="1"/>
</dbReference>
<dbReference type="PANTHER" id="PTHR43128">
    <property type="entry name" value="L-2-HYDROXYCARBOXYLATE DEHYDROGENASE (NAD(P)(+))"/>
    <property type="match status" value="1"/>
</dbReference>
<dbReference type="PANTHER" id="PTHR43128:SF16">
    <property type="entry name" value="L-LACTATE DEHYDROGENASE"/>
    <property type="match status" value="1"/>
</dbReference>
<dbReference type="Pfam" id="PF02866">
    <property type="entry name" value="Ldh_1_C"/>
    <property type="match status" value="1"/>
</dbReference>
<dbReference type="Pfam" id="PF00056">
    <property type="entry name" value="Ldh_1_N"/>
    <property type="match status" value="1"/>
</dbReference>
<dbReference type="PIRSF" id="PIRSF000102">
    <property type="entry name" value="Lac_mal_DH"/>
    <property type="match status" value="1"/>
</dbReference>
<dbReference type="PRINTS" id="PR00086">
    <property type="entry name" value="LLDHDRGNASE"/>
</dbReference>
<dbReference type="SUPFAM" id="SSF56327">
    <property type="entry name" value="LDH C-terminal domain-like"/>
    <property type="match status" value="1"/>
</dbReference>
<dbReference type="SUPFAM" id="SSF51735">
    <property type="entry name" value="NAD(P)-binding Rossmann-fold domains"/>
    <property type="match status" value="1"/>
</dbReference>
<dbReference type="PROSITE" id="PS00064">
    <property type="entry name" value="L_LDH"/>
    <property type="match status" value="1"/>
</dbReference>
<organism>
    <name type="scientific">Streptococcus sanguinis (strain SK36)</name>
    <dbReference type="NCBI Taxonomy" id="388919"/>
    <lineage>
        <taxon>Bacteria</taxon>
        <taxon>Bacillati</taxon>
        <taxon>Bacillota</taxon>
        <taxon>Bacilli</taxon>
        <taxon>Lactobacillales</taxon>
        <taxon>Streptococcaceae</taxon>
        <taxon>Streptococcus</taxon>
    </lineage>
</organism>